<feature type="chain" id="PRO_0000208490" description="Pannexin-2">
    <location>
        <begin position="1"/>
        <end position="674"/>
    </location>
</feature>
<feature type="topological domain" description="Cytoplasmic" evidence="2">
    <location>
        <begin position="11"/>
        <end position="53"/>
    </location>
</feature>
<feature type="transmembrane region" description="Helical" evidence="3">
    <location>
        <begin position="54"/>
        <end position="74"/>
    </location>
</feature>
<feature type="topological domain" description="Extracellular" evidence="2">
    <location>
        <begin position="75"/>
        <end position="125"/>
    </location>
</feature>
<feature type="transmembrane region" description="Helical" evidence="3">
    <location>
        <begin position="126"/>
        <end position="146"/>
    </location>
</feature>
<feature type="topological domain" description="Cytoplasmic" evidence="2">
    <location>
        <begin position="147"/>
        <end position="230"/>
    </location>
</feature>
<feature type="transmembrane region" description="Helical" evidence="3">
    <location>
        <begin position="231"/>
        <end position="251"/>
    </location>
</feature>
<feature type="topological domain" description="Extracellular" evidence="2">
    <location>
        <begin position="252"/>
        <end position="295"/>
    </location>
</feature>
<feature type="transmembrane region" description="Helical" evidence="3">
    <location>
        <begin position="296"/>
        <end position="316"/>
    </location>
</feature>
<feature type="topological domain" description="Cytoplasmic" evidence="2">
    <location>
        <begin position="317"/>
        <end position="674"/>
    </location>
</feature>
<feature type="region of interest" description="Disordered" evidence="4">
    <location>
        <begin position="394"/>
        <end position="426"/>
    </location>
</feature>
<feature type="region of interest" description="Disordered" evidence="4">
    <location>
        <begin position="485"/>
        <end position="510"/>
    </location>
</feature>
<feature type="compositionally biased region" description="Polar residues" evidence="4">
    <location>
        <begin position="394"/>
        <end position="408"/>
    </location>
</feature>
<feature type="modified residue" description="Phosphoserine" evidence="1">
    <location>
        <position position="590"/>
    </location>
</feature>
<feature type="modified residue" description="Phosphoserine" evidence="1">
    <location>
        <position position="601"/>
    </location>
</feature>
<feature type="glycosylation site" description="N-linked (GlcNAc...) asparagine" evidence="2">
    <location>
        <position position="86"/>
    </location>
</feature>
<sequence length="674" mass="74434">MHHLLEQSADMATALLAGEKLRELILPGSQDDKAGALAALLLQLKLELPFDRVVTIGTVLVPILLVTLVFTKNFAEEPIYCYTPHNFTRDQALYARGYCWTELRDALPGVDASLWPSLFEHKFLPYALLAFAAIMYVPALGWEFLASTRLTSELNFLLQEIDNCYHRAAEGRAPKIEKQIQSKGPGITEREKREIIENAEKEKSPEQNLFEKYLERRGRSNFLAKLYLARHVLILLLSVVPISYLCTYYATQKQNEFTCALGASPDGPVGSAGPTVRVSCKLPSVQLQRIIAGVDIVLLCFMNLIILVNLIHLFIFRKSNFIFDKLHKVGIKTRRQWRRSQFCDINILAMFCNENRDHIKSLNRLDFITNESDLMYDNVVRQLLAALAQSNHDTTPTVRDSGIQTVDPSINPAEPEGSAEPPVVKRPRKKMKWIPTSNPLPQPFKEQLAIMRVENSKTEKPKPVRRKTATDTLIAPLLDAGARAAHHYKGSGGDTGPSSAPPAASEKKHTRHFSLDVHPYILGSKKAKTEAVPPALPASRSQEGGFLSQTEECGLGLAAAPTKDAPLPEKEIPYPTESALPSGGPFHVCSPPTASAAASLSPSSLGKADPLTILSRNATHPLLHISTLYEAREEEEGGPCAPSDMGDLLSIPPPQQILIATFEEPRTVVSTVEF</sequence>
<organism>
    <name type="scientific">Rattus norvegicus</name>
    <name type="common">Rat</name>
    <dbReference type="NCBI Taxonomy" id="10116"/>
    <lineage>
        <taxon>Eukaryota</taxon>
        <taxon>Metazoa</taxon>
        <taxon>Chordata</taxon>
        <taxon>Craniata</taxon>
        <taxon>Vertebrata</taxon>
        <taxon>Euteleostomi</taxon>
        <taxon>Mammalia</taxon>
        <taxon>Eutheria</taxon>
        <taxon>Euarchontoglires</taxon>
        <taxon>Glires</taxon>
        <taxon>Rodentia</taxon>
        <taxon>Myomorpha</taxon>
        <taxon>Muroidea</taxon>
        <taxon>Muridae</taxon>
        <taxon>Murinae</taxon>
        <taxon>Rattus</taxon>
    </lineage>
</organism>
<reference key="1">
    <citation type="journal article" date="2003" name="Proc. Natl. Acad. Sci. U.S.A.">
        <title>Pannexins, a family of gap junction proteins expressed in brain.</title>
        <authorList>
            <person name="Bruzzone R."/>
            <person name="Hormuzdi S.G."/>
            <person name="Barbe M."/>
            <person name="Herb A."/>
            <person name="Monyer H."/>
        </authorList>
    </citation>
    <scope>NUCLEOTIDE SEQUENCE [MRNA]</scope>
    <scope>TISSUE SPECIFICITY</scope>
    <scope>SUBUNIT</scope>
    <source>
        <strain>Wistar</strain>
        <tissue>Hippocampus</tissue>
    </source>
</reference>
<comment type="function">
    <text>Structural component of the gap junctions and the hemichannels.</text>
</comment>
<comment type="subunit">
    <text evidence="5">Forms PANX1/PANX2-heteromeric intercellular channels on coexpression in paired Xenopus oocytes. Does not form homomeric channels.</text>
</comment>
<comment type="subcellular location">
    <subcellularLocation>
        <location evidence="1">Cell membrane</location>
        <topology evidence="3">Multi-pass membrane protein</topology>
    </subcellularLocation>
    <subcellularLocation>
        <location evidence="1">Golgi apparatus membrane</location>
        <topology evidence="3">Multi-pass membrane protein</topology>
    </subcellularLocation>
    <subcellularLocation>
        <location evidence="1">Endoplasmic reticulum membrane</location>
        <topology evidence="3">Multi-pass membrane protein</topology>
    </subcellularLocation>
    <text evidence="1">Localizes to Golgi apparatus and endoplasmic reticulum in multipotential neural stem and progenitor cells and to plasma membrane in terminally differentiated neurons.</text>
</comment>
<comment type="tissue specificity">
    <text evidence="5">Expressed in the eye, thyroid, prostate, kidney and liver. Abundantly expressed in the CNS, including hippocampus, olfactory bulb, cortex, cerebellum. Not detected in the white matter.</text>
</comment>
<comment type="PTM">
    <text evidence="1">S-palmitoylated in neural stem and progenitor cells.</text>
</comment>
<comment type="PTM">
    <text evidence="1">Cleaved by CASP3 and CASP7 during apoptosis. Cleavage has no effect on it function.</text>
</comment>
<comment type="similarity">
    <text evidence="3">Belongs to the pannexin family.</text>
</comment>
<comment type="sequence caution" evidence="6">
    <conflict type="erroneous initiation">
        <sequence resource="EMBL-CDS" id="CAD89523"/>
    </conflict>
    <text>Truncated N-terminus.</text>
</comment>
<dbReference type="EMBL" id="AJ557016">
    <property type="protein sequence ID" value="CAD89523.1"/>
    <property type="status" value="ALT_INIT"/>
    <property type="molecule type" value="mRNA"/>
</dbReference>
<dbReference type="RefSeq" id="NP_955441.2">
    <property type="nucleotide sequence ID" value="NM_199409.2"/>
</dbReference>
<dbReference type="SMR" id="P60571"/>
<dbReference type="FunCoup" id="P60571">
    <property type="interactions" value="538"/>
</dbReference>
<dbReference type="STRING" id="10116.ENSRNOP00000069647"/>
<dbReference type="GlyCosmos" id="P60571">
    <property type="glycosylation" value="1 site, No reported glycans"/>
</dbReference>
<dbReference type="GlyGen" id="P60571">
    <property type="glycosylation" value="1 site"/>
</dbReference>
<dbReference type="PhosphoSitePlus" id="P60571"/>
<dbReference type="PaxDb" id="10116-ENSRNOP00000047054"/>
<dbReference type="ABCD" id="P60571">
    <property type="antibodies" value="1 sequenced antibody"/>
</dbReference>
<dbReference type="Ensembl" id="ENSRNOT00000089707.2">
    <property type="protein sequence ID" value="ENSRNOP00000069647.2"/>
    <property type="gene ID" value="ENSRNOG00000055530.2"/>
</dbReference>
<dbReference type="GeneID" id="362979"/>
<dbReference type="KEGG" id="rno:362979"/>
<dbReference type="AGR" id="RGD:735191"/>
<dbReference type="CTD" id="56666"/>
<dbReference type="RGD" id="735191">
    <property type="gene designation" value="Panx2"/>
</dbReference>
<dbReference type="eggNOG" id="ENOG502QT63">
    <property type="taxonomic scope" value="Eukaryota"/>
</dbReference>
<dbReference type="InParanoid" id="P60571"/>
<dbReference type="PhylomeDB" id="P60571"/>
<dbReference type="TreeFam" id="TF333142"/>
<dbReference type="Reactome" id="R-RNO-112303">
    <property type="pathway name" value="Electric Transmission Across Gap Junctions"/>
</dbReference>
<dbReference type="PRO" id="PR:P60571"/>
<dbReference type="Proteomes" id="UP000002494">
    <property type="component" value="Chromosome 7"/>
</dbReference>
<dbReference type="GO" id="GO:0005737">
    <property type="term" value="C:cytoplasm"/>
    <property type="evidence" value="ECO:0000266"/>
    <property type="project" value="RGD"/>
</dbReference>
<dbReference type="GO" id="GO:0005789">
    <property type="term" value="C:endoplasmic reticulum membrane"/>
    <property type="evidence" value="ECO:0007669"/>
    <property type="project" value="UniProtKB-SubCell"/>
</dbReference>
<dbReference type="GO" id="GO:0000139">
    <property type="term" value="C:Golgi membrane"/>
    <property type="evidence" value="ECO:0007669"/>
    <property type="project" value="UniProtKB-SubCell"/>
</dbReference>
<dbReference type="GO" id="GO:0005886">
    <property type="term" value="C:plasma membrane"/>
    <property type="evidence" value="ECO:0000318"/>
    <property type="project" value="GO_Central"/>
</dbReference>
<dbReference type="GO" id="GO:0005243">
    <property type="term" value="F:gap junction channel activity"/>
    <property type="evidence" value="ECO:0000315"/>
    <property type="project" value="RGD"/>
</dbReference>
<dbReference type="GO" id="GO:0044877">
    <property type="term" value="F:protein-containing complex binding"/>
    <property type="evidence" value="ECO:0000315"/>
    <property type="project" value="RGD"/>
</dbReference>
<dbReference type="GO" id="GO:0005198">
    <property type="term" value="F:structural molecule activity"/>
    <property type="evidence" value="ECO:0000250"/>
    <property type="project" value="UniProtKB"/>
</dbReference>
<dbReference type="GO" id="GO:0022829">
    <property type="term" value="F:wide pore channel activity"/>
    <property type="evidence" value="ECO:0000318"/>
    <property type="project" value="GO_Central"/>
</dbReference>
<dbReference type="GO" id="GO:0007267">
    <property type="term" value="P:cell-cell signaling"/>
    <property type="evidence" value="ECO:0000315"/>
    <property type="project" value="RGD"/>
</dbReference>
<dbReference type="GO" id="GO:0006812">
    <property type="term" value="P:monoatomic cation transport"/>
    <property type="evidence" value="ECO:0000318"/>
    <property type="project" value="GO_Central"/>
</dbReference>
<dbReference type="GO" id="GO:0034220">
    <property type="term" value="P:monoatomic ion transmembrane transport"/>
    <property type="evidence" value="ECO:0007669"/>
    <property type="project" value="UniProtKB-KW"/>
</dbReference>
<dbReference type="GO" id="GO:0032732">
    <property type="term" value="P:positive regulation of interleukin-1 production"/>
    <property type="evidence" value="ECO:0007669"/>
    <property type="project" value="InterPro"/>
</dbReference>
<dbReference type="GO" id="GO:0002931">
    <property type="term" value="P:response to ischemia"/>
    <property type="evidence" value="ECO:0000266"/>
    <property type="project" value="RGD"/>
</dbReference>
<dbReference type="InterPro" id="IPR000990">
    <property type="entry name" value="Innexin"/>
</dbReference>
<dbReference type="InterPro" id="IPR039099">
    <property type="entry name" value="Pannexin"/>
</dbReference>
<dbReference type="PANTHER" id="PTHR15759">
    <property type="entry name" value="PANNEXIN"/>
    <property type="match status" value="1"/>
</dbReference>
<dbReference type="PANTHER" id="PTHR15759:SF7">
    <property type="entry name" value="PANNEXIN-2"/>
    <property type="match status" value="1"/>
</dbReference>
<dbReference type="Pfam" id="PF00876">
    <property type="entry name" value="Innexin"/>
    <property type="match status" value="1"/>
</dbReference>
<dbReference type="PROSITE" id="PS51013">
    <property type="entry name" value="PANNEXIN"/>
    <property type="match status" value="1"/>
</dbReference>
<gene>
    <name type="primary">Panx2</name>
    <name type="synonym">Px2</name>
</gene>
<protein>
    <recommendedName>
        <fullName>Pannexin-2</fullName>
    </recommendedName>
</protein>
<keyword id="KW-1003">Cell membrane</keyword>
<keyword id="KW-0256">Endoplasmic reticulum</keyword>
<keyword id="KW-0325">Glycoprotein</keyword>
<keyword id="KW-0333">Golgi apparatus</keyword>
<keyword id="KW-0407">Ion channel</keyword>
<keyword id="KW-0406">Ion transport</keyword>
<keyword id="KW-0472">Membrane</keyword>
<keyword id="KW-0597">Phosphoprotein</keyword>
<keyword id="KW-1185">Reference proteome</keyword>
<keyword id="KW-0812">Transmembrane</keyword>
<keyword id="KW-1133">Transmembrane helix</keyword>
<keyword id="KW-0813">Transport</keyword>
<evidence type="ECO:0000250" key="1">
    <source>
        <dbReference type="UniProtKB" id="Q6IMP4"/>
    </source>
</evidence>
<evidence type="ECO:0000255" key="2"/>
<evidence type="ECO:0000255" key="3">
    <source>
        <dbReference type="PROSITE-ProRule" id="PRU00351"/>
    </source>
</evidence>
<evidence type="ECO:0000256" key="4">
    <source>
        <dbReference type="SAM" id="MobiDB-lite"/>
    </source>
</evidence>
<evidence type="ECO:0000269" key="5">
    <source>
    </source>
</evidence>
<evidence type="ECO:0000305" key="6"/>
<name>PANX2_RAT</name>
<proteinExistence type="evidence at protein level"/>
<accession>P60571</accession>